<sequence length="272" mass="29402">MTVFPAGQQFQTEGECLPSYQVRLACRAGQADTTAGVAPGFVQGNLAILPEKYAAAFHRFCQLNPKPCPIIGMSDVGNPQIPALGLDLDIRTDLPRYRVWRDGELIEEPTDVMAHWRDDLVAFVVGCSFSFEEALLADDIPIRHIERKVRVPMYRTNIACTPAGPFAGPMVVSMRPLKPADAIRAVQITSRFPSVHGAPVHIGLPQSIGIADIANPDYGDPVPIAPDELPVFWACGVTPQAVIAAAKVPFAITHAPGLMLVTDLKNKHLAVL</sequence>
<dbReference type="EC" id="4.2.1.-" evidence="1"/>
<dbReference type="EMBL" id="CP000283">
    <property type="protein sequence ID" value="ABE39082.1"/>
    <property type="molecule type" value="Genomic_DNA"/>
</dbReference>
<dbReference type="SMR" id="Q13A07"/>
<dbReference type="STRING" id="316057.RPD_1846"/>
<dbReference type="KEGG" id="rpd:RPD_1846"/>
<dbReference type="eggNOG" id="COG4336">
    <property type="taxonomic scope" value="Bacteria"/>
</dbReference>
<dbReference type="HOGENOM" id="CLU_059759_0_0_5"/>
<dbReference type="BioCyc" id="RPAL316057:RPD_RS09275-MONOMER"/>
<dbReference type="Proteomes" id="UP000001818">
    <property type="component" value="Chromosome"/>
</dbReference>
<dbReference type="GO" id="GO:0016829">
    <property type="term" value="F:lyase activity"/>
    <property type="evidence" value="ECO:0007669"/>
    <property type="project" value="UniProtKB-KW"/>
</dbReference>
<dbReference type="FunFam" id="3.30.2040.10:FF:000001">
    <property type="entry name" value="D-glutamate cyclase, mitochondrial"/>
    <property type="match status" value="1"/>
</dbReference>
<dbReference type="Gene3D" id="3.40.1640.10">
    <property type="entry name" value="PSTPO5379-like"/>
    <property type="match status" value="1"/>
</dbReference>
<dbReference type="Gene3D" id="3.30.2040.10">
    <property type="entry name" value="PSTPO5379-like domain"/>
    <property type="match status" value="1"/>
</dbReference>
<dbReference type="HAMAP" id="MF_01830">
    <property type="entry name" value="Hydro_lyase"/>
    <property type="match status" value="1"/>
</dbReference>
<dbReference type="InterPro" id="IPR009906">
    <property type="entry name" value="D-Glu_cyclase"/>
</dbReference>
<dbReference type="InterPro" id="IPR038021">
    <property type="entry name" value="Putative_hydro-lyase"/>
</dbReference>
<dbReference type="InterPro" id="IPR016938">
    <property type="entry name" value="UPF0317"/>
</dbReference>
<dbReference type="NCBIfam" id="NF003969">
    <property type="entry name" value="PRK05463.1"/>
    <property type="match status" value="1"/>
</dbReference>
<dbReference type="PANTHER" id="PTHR32022">
    <property type="entry name" value="D-GLUTAMATE CYCLASE, MITOCHONDRIAL"/>
    <property type="match status" value="1"/>
</dbReference>
<dbReference type="PANTHER" id="PTHR32022:SF10">
    <property type="entry name" value="D-GLUTAMATE CYCLASE, MITOCHONDRIAL"/>
    <property type="match status" value="1"/>
</dbReference>
<dbReference type="Pfam" id="PF07286">
    <property type="entry name" value="D-Glu_cyclase"/>
    <property type="match status" value="1"/>
</dbReference>
<dbReference type="PIRSF" id="PIRSF029755">
    <property type="entry name" value="UCP029755"/>
    <property type="match status" value="1"/>
</dbReference>
<dbReference type="SUPFAM" id="SSF160920">
    <property type="entry name" value="PSTPO5379-like"/>
    <property type="match status" value="1"/>
</dbReference>
<accession>Q13A07</accession>
<keyword id="KW-0456">Lyase</keyword>
<feature type="chain" id="PRO_1000070418" description="Putative hydro-lyase RPD_1846">
    <location>
        <begin position="1"/>
        <end position="272"/>
    </location>
</feature>
<name>Y1846_RHOPS</name>
<gene>
    <name type="ordered locus">RPD_1846</name>
</gene>
<organism>
    <name type="scientific">Rhodopseudomonas palustris (strain BisB5)</name>
    <dbReference type="NCBI Taxonomy" id="316057"/>
    <lineage>
        <taxon>Bacteria</taxon>
        <taxon>Pseudomonadati</taxon>
        <taxon>Pseudomonadota</taxon>
        <taxon>Alphaproteobacteria</taxon>
        <taxon>Hyphomicrobiales</taxon>
        <taxon>Nitrobacteraceae</taxon>
        <taxon>Rhodopseudomonas</taxon>
    </lineage>
</organism>
<evidence type="ECO:0000255" key="1">
    <source>
        <dbReference type="HAMAP-Rule" id="MF_01830"/>
    </source>
</evidence>
<proteinExistence type="inferred from homology"/>
<reference key="1">
    <citation type="submission" date="2006-03" db="EMBL/GenBank/DDBJ databases">
        <title>Complete sequence of Rhodopseudomonas palustris BisB5.</title>
        <authorList>
            <consortium name="US DOE Joint Genome Institute"/>
            <person name="Copeland A."/>
            <person name="Lucas S."/>
            <person name="Lapidus A."/>
            <person name="Barry K."/>
            <person name="Detter J.C."/>
            <person name="Glavina del Rio T."/>
            <person name="Hammon N."/>
            <person name="Israni S."/>
            <person name="Dalin E."/>
            <person name="Tice H."/>
            <person name="Pitluck S."/>
            <person name="Chain P."/>
            <person name="Malfatti S."/>
            <person name="Shin M."/>
            <person name="Vergez L."/>
            <person name="Schmutz J."/>
            <person name="Larimer F."/>
            <person name="Land M."/>
            <person name="Hauser L."/>
            <person name="Pelletier D.A."/>
            <person name="Kyrpides N."/>
            <person name="Lykidis A."/>
            <person name="Oda Y."/>
            <person name="Harwood C.S."/>
            <person name="Richardson P."/>
        </authorList>
    </citation>
    <scope>NUCLEOTIDE SEQUENCE [LARGE SCALE GENOMIC DNA]</scope>
    <source>
        <strain>BisB5</strain>
    </source>
</reference>
<comment type="similarity">
    <text evidence="1">Belongs to the D-glutamate cyclase family.</text>
</comment>
<protein>
    <recommendedName>
        <fullName evidence="1">Putative hydro-lyase RPD_1846</fullName>
        <ecNumber evidence="1">4.2.1.-</ecNumber>
    </recommendedName>
</protein>